<proteinExistence type="inferred from homology"/>
<accession>Q1II29</accession>
<comment type="function">
    <text evidence="1">Methylates the class 1 translation termination release factors RF1/PrfA and RF2/PrfB on the glutamine residue of the universally conserved GGQ motif.</text>
</comment>
<comment type="catalytic activity">
    <reaction evidence="1">
        <text>L-glutaminyl-[peptide chain release factor] + S-adenosyl-L-methionine = N(5)-methyl-L-glutaminyl-[peptide chain release factor] + S-adenosyl-L-homocysteine + H(+)</text>
        <dbReference type="Rhea" id="RHEA:42896"/>
        <dbReference type="Rhea" id="RHEA-COMP:10271"/>
        <dbReference type="Rhea" id="RHEA-COMP:10272"/>
        <dbReference type="ChEBI" id="CHEBI:15378"/>
        <dbReference type="ChEBI" id="CHEBI:30011"/>
        <dbReference type="ChEBI" id="CHEBI:57856"/>
        <dbReference type="ChEBI" id="CHEBI:59789"/>
        <dbReference type="ChEBI" id="CHEBI:61891"/>
        <dbReference type="EC" id="2.1.1.297"/>
    </reaction>
</comment>
<comment type="similarity">
    <text evidence="1">Belongs to the protein N5-glutamine methyltransferase family. PrmC subfamily.</text>
</comment>
<feature type="chain" id="PRO_0000414526" description="Release factor glutamine methyltransferase">
    <location>
        <begin position="1"/>
        <end position="280"/>
    </location>
</feature>
<feature type="binding site" evidence="1">
    <location>
        <begin position="120"/>
        <end position="124"/>
    </location>
    <ligand>
        <name>S-adenosyl-L-methionine</name>
        <dbReference type="ChEBI" id="CHEBI:59789"/>
    </ligand>
</feature>
<feature type="binding site" evidence="1">
    <location>
        <position position="143"/>
    </location>
    <ligand>
        <name>S-adenosyl-L-methionine</name>
        <dbReference type="ChEBI" id="CHEBI:59789"/>
    </ligand>
</feature>
<feature type="binding site" evidence="1">
    <location>
        <begin position="186"/>
        <end position="189"/>
    </location>
    <ligand>
        <name>substrate</name>
    </ligand>
</feature>
<feature type="binding site" evidence="1">
    <location>
        <position position="186"/>
    </location>
    <ligand>
        <name>S-adenosyl-L-methionine</name>
        <dbReference type="ChEBI" id="CHEBI:59789"/>
    </ligand>
</feature>
<name>PRMC_KORVE</name>
<dbReference type="EC" id="2.1.1.297" evidence="1"/>
<dbReference type="EMBL" id="CP000360">
    <property type="protein sequence ID" value="ABF43471.1"/>
    <property type="molecule type" value="Genomic_DNA"/>
</dbReference>
<dbReference type="RefSeq" id="WP_011525268.1">
    <property type="nucleotide sequence ID" value="NC_008009.1"/>
</dbReference>
<dbReference type="SMR" id="Q1II29"/>
<dbReference type="STRING" id="204669.Acid345_4471"/>
<dbReference type="EnsemblBacteria" id="ABF43471">
    <property type="protein sequence ID" value="ABF43471"/>
    <property type="gene ID" value="Acid345_4471"/>
</dbReference>
<dbReference type="KEGG" id="aba:Acid345_4471"/>
<dbReference type="eggNOG" id="COG2890">
    <property type="taxonomic scope" value="Bacteria"/>
</dbReference>
<dbReference type="HOGENOM" id="CLU_018398_3_1_0"/>
<dbReference type="OrthoDB" id="9800643at2"/>
<dbReference type="Proteomes" id="UP000002432">
    <property type="component" value="Chromosome"/>
</dbReference>
<dbReference type="GO" id="GO:0003676">
    <property type="term" value="F:nucleic acid binding"/>
    <property type="evidence" value="ECO:0007669"/>
    <property type="project" value="InterPro"/>
</dbReference>
<dbReference type="GO" id="GO:0102559">
    <property type="term" value="F:protein-(glutamine-N5) methyltransferase activity"/>
    <property type="evidence" value="ECO:0007669"/>
    <property type="project" value="UniProtKB-EC"/>
</dbReference>
<dbReference type="GO" id="GO:0036009">
    <property type="term" value="F:protein-glutamine N-methyltransferase activity"/>
    <property type="evidence" value="ECO:0007669"/>
    <property type="project" value="UniProtKB-UniRule"/>
</dbReference>
<dbReference type="GO" id="GO:0032259">
    <property type="term" value="P:methylation"/>
    <property type="evidence" value="ECO:0007669"/>
    <property type="project" value="UniProtKB-KW"/>
</dbReference>
<dbReference type="CDD" id="cd02440">
    <property type="entry name" value="AdoMet_MTases"/>
    <property type="match status" value="1"/>
</dbReference>
<dbReference type="Gene3D" id="1.10.8.10">
    <property type="entry name" value="DNA helicase RuvA subunit, C-terminal domain"/>
    <property type="match status" value="1"/>
</dbReference>
<dbReference type="Gene3D" id="3.40.50.150">
    <property type="entry name" value="Vaccinia Virus protein VP39"/>
    <property type="match status" value="1"/>
</dbReference>
<dbReference type="HAMAP" id="MF_02126">
    <property type="entry name" value="RF_methyltr_PrmC"/>
    <property type="match status" value="1"/>
</dbReference>
<dbReference type="InterPro" id="IPR002052">
    <property type="entry name" value="DNA_methylase_N6_adenine_CS"/>
</dbReference>
<dbReference type="InterPro" id="IPR004556">
    <property type="entry name" value="HemK-like"/>
</dbReference>
<dbReference type="InterPro" id="IPR050320">
    <property type="entry name" value="N5-glutamine_MTase"/>
</dbReference>
<dbReference type="InterPro" id="IPR040758">
    <property type="entry name" value="PrmC_N"/>
</dbReference>
<dbReference type="InterPro" id="IPR019874">
    <property type="entry name" value="RF_methyltr_PrmC"/>
</dbReference>
<dbReference type="InterPro" id="IPR029063">
    <property type="entry name" value="SAM-dependent_MTases_sf"/>
</dbReference>
<dbReference type="InterPro" id="IPR007848">
    <property type="entry name" value="Small_mtfrase_dom"/>
</dbReference>
<dbReference type="NCBIfam" id="TIGR00536">
    <property type="entry name" value="hemK_fam"/>
    <property type="match status" value="1"/>
</dbReference>
<dbReference type="NCBIfam" id="TIGR03534">
    <property type="entry name" value="RF_mod_PrmC"/>
    <property type="match status" value="1"/>
</dbReference>
<dbReference type="PANTHER" id="PTHR18895">
    <property type="entry name" value="HEMK METHYLTRANSFERASE"/>
    <property type="match status" value="1"/>
</dbReference>
<dbReference type="PANTHER" id="PTHR18895:SF74">
    <property type="entry name" value="MTRF1L RELEASE FACTOR GLUTAMINE METHYLTRANSFERASE"/>
    <property type="match status" value="1"/>
</dbReference>
<dbReference type="Pfam" id="PF05175">
    <property type="entry name" value="MTS"/>
    <property type="match status" value="1"/>
</dbReference>
<dbReference type="Pfam" id="PF17827">
    <property type="entry name" value="PrmC_N"/>
    <property type="match status" value="1"/>
</dbReference>
<dbReference type="SUPFAM" id="SSF53335">
    <property type="entry name" value="S-adenosyl-L-methionine-dependent methyltransferases"/>
    <property type="match status" value="1"/>
</dbReference>
<reference key="1">
    <citation type="journal article" date="2009" name="Appl. Environ. Microbiol.">
        <title>Three genomes from the phylum Acidobacteria provide insight into the lifestyles of these microorganisms in soils.</title>
        <authorList>
            <person name="Ward N.L."/>
            <person name="Challacombe J.F."/>
            <person name="Janssen P.H."/>
            <person name="Henrissat B."/>
            <person name="Coutinho P.M."/>
            <person name="Wu M."/>
            <person name="Xie G."/>
            <person name="Haft D.H."/>
            <person name="Sait M."/>
            <person name="Badger J."/>
            <person name="Barabote R.D."/>
            <person name="Bradley B."/>
            <person name="Brettin T.S."/>
            <person name="Brinkac L.M."/>
            <person name="Bruce D."/>
            <person name="Creasy T."/>
            <person name="Daugherty S.C."/>
            <person name="Davidsen T.M."/>
            <person name="DeBoy R.T."/>
            <person name="Detter J.C."/>
            <person name="Dodson R.J."/>
            <person name="Durkin A.S."/>
            <person name="Ganapathy A."/>
            <person name="Gwinn-Giglio M."/>
            <person name="Han C.S."/>
            <person name="Khouri H."/>
            <person name="Kiss H."/>
            <person name="Kothari S.P."/>
            <person name="Madupu R."/>
            <person name="Nelson K.E."/>
            <person name="Nelson W.C."/>
            <person name="Paulsen I."/>
            <person name="Penn K."/>
            <person name="Ren Q."/>
            <person name="Rosovitz M.J."/>
            <person name="Selengut J.D."/>
            <person name="Shrivastava S."/>
            <person name="Sullivan S.A."/>
            <person name="Tapia R."/>
            <person name="Thompson L.S."/>
            <person name="Watkins K.L."/>
            <person name="Yang Q."/>
            <person name="Yu C."/>
            <person name="Zafar N."/>
            <person name="Zhou L."/>
            <person name="Kuske C.R."/>
        </authorList>
    </citation>
    <scope>NUCLEOTIDE SEQUENCE [LARGE SCALE GENOMIC DNA]</scope>
    <source>
        <strain>Ellin345</strain>
    </source>
</reference>
<gene>
    <name evidence="1" type="primary">prmC</name>
    <name type="ordered locus">Acid345_4471</name>
</gene>
<evidence type="ECO:0000255" key="1">
    <source>
        <dbReference type="HAMAP-Rule" id="MF_02126"/>
    </source>
</evidence>
<sequence length="280" mass="31472">MTLKQAFDSALKHLEAADTPSPRLSAELLLMFSLNCDRAYLFTYPERELTADEQARYDEAIARRCHGEPAQYITGHQEFYGRDFLVSPAVLIPRPETEHLIEAVLELAPREVRWEVLDVGTGSGCIAATLAKEFPRMKVTAVDISPEALQIAQANAARLEAQVEFRVSDLLSAIEPGRQFDMIVSNPPYVGECEADKVQRQVKDFEPHCAVFGGERGMDIIKRLAPQVWEHLKPGGWFLMEIGYSIADPVHEIMRDWTNFKVVPDLRGIPRVVVGRKPTS</sequence>
<protein>
    <recommendedName>
        <fullName evidence="1">Release factor glutamine methyltransferase</fullName>
        <shortName evidence="1">RF MTase</shortName>
        <ecNumber evidence="1">2.1.1.297</ecNumber>
    </recommendedName>
    <alternativeName>
        <fullName evidence="1">N5-glutamine methyltransferase PrmC</fullName>
    </alternativeName>
    <alternativeName>
        <fullName evidence="1">Protein-(glutamine-N5) MTase PrmC</fullName>
    </alternativeName>
    <alternativeName>
        <fullName evidence="1">Protein-glutamine N-methyltransferase PrmC</fullName>
    </alternativeName>
</protein>
<keyword id="KW-0489">Methyltransferase</keyword>
<keyword id="KW-1185">Reference proteome</keyword>
<keyword id="KW-0949">S-adenosyl-L-methionine</keyword>
<keyword id="KW-0808">Transferase</keyword>
<organism>
    <name type="scientific">Koribacter versatilis (strain Ellin345)</name>
    <dbReference type="NCBI Taxonomy" id="204669"/>
    <lineage>
        <taxon>Bacteria</taxon>
        <taxon>Pseudomonadati</taxon>
        <taxon>Acidobacteriota</taxon>
        <taxon>Terriglobia</taxon>
        <taxon>Terriglobales</taxon>
        <taxon>Candidatus Korobacteraceae</taxon>
        <taxon>Candidatus Korobacter</taxon>
    </lineage>
</organism>